<accession>B4EYV8</accession>
<reference key="1">
    <citation type="journal article" date="2008" name="J. Bacteriol.">
        <title>Complete genome sequence of uropathogenic Proteus mirabilis, a master of both adherence and motility.</title>
        <authorList>
            <person name="Pearson M.M."/>
            <person name="Sebaihia M."/>
            <person name="Churcher C."/>
            <person name="Quail M.A."/>
            <person name="Seshasayee A.S."/>
            <person name="Luscombe N.M."/>
            <person name="Abdellah Z."/>
            <person name="Arrosmith C."/>
            <person name="Atkin B."/>
            <person name="Chillingworth T."/>
            <person name="Hauser H."/>
            <person name="Jagels K."/>
            <person name="Moule S."/>
            <person name="Mungall K."/>
            <person name="Norbertczak H."/>
            <person name="Rabbinowitsch E."/>
            <person name="Walker D."/>
            <person name="Whithead S."/>
            <person name="Thomson N.R."/>
            <person name="Rather P.N."/>
            <person name="Parkhill J."/>
            <person name="Mobley H.L.T."/>
        </authorList>
    </citation>
    <scope>NUCLEOTIDE SEQUENCE [LARGE SCALE GENOMIC DNA]</scope>
    <source>
        <strain>HI4320</strain>
    </source>
</reference>
<gene>
    <name evidence="1" type="primary">rpsG</name>
    <name type="ordered locus">PMI2794</name>
</gene>
<name>RS7_PROMH</name>
<protein>
    <recommendedName>
        <fullName evidence="1">Small ribosomal subunit protein uS7</fullName>
    </recommendedName>
    <alternativeName>
        <fullName evidence="2">30S ribosomal protein S7</fullName>
    </alternativeName>
</protein>
<proteinExistence type="inferred from homology"/>
<organism>
    <name type="scientific">Proteus mirabilis (strain HI4320)</name>
    <dbReference type="NCBI Taxonomy" id="529507"/>
    <lineage>
        <taxon>Bacteria</taxon>
        <taxon>Pseudomonadati</taxon>
        <taxon>Pseudomonadota</taxon>
        <taxon>Gammaproteobacteria</taxon>
        <taxon>Enterobacterales</taxon>
        <taxon>Morganellaceae</taxon>
        <taxon>Proteus</taxon>
    </lineage>
</organism>
<evidence type="ECO:0000255" key="1">
    <source>
        <dbReference type="HAMAP-Rule" id="MF_00480"/>
    </source>
</evidence>
<evidence type="ECO:0000305" key="2"/>
<sequence length="156" mass="17601">MPRRRVIGQRKILPDPKFGSELLAKFVNILMVDGKKSTAESIVYNALETLAQRSGKTELEAFEIALDNVRPTVEVKSRRVGGSTYQVPVEVRPVRRNALAMRWIVEAARKRGDKSMALRLANELSDAAENKGAAVKKREDVHRMADANKAFAHYRW</sequence>
<keyword id="KW-1185">Reference proteome</keyword>
<keyword id="KW-0687">Ribonucleoprotein</keyword>
<keyword id="KW-0689">Ribosomal protein</keyword>
<keyword id="KW-0694">RNA-binding</keyword>
<keyword id="KW-0699">rRNA-binding</keyword>
<keyword id="KW-0820">tRNA-binding</keyword>
<feature type="chain" id="PRO_1000125985" description="Small ribosomal subunit protein uS7">
    <location>
        <begin position="1"/>
        <end position="156"/>
    </location>
</feature>
<dbReference type="EMBL" id="AM942759">
    <property type="protein sequence ID" value="CAR45509.1"/>
    <property type="molecule type" value="Genomic_DNA"/>
</dbReference>
<dbReference type="RefSeq" id="WP_004246897.1">
    <property type="nucleotide sequence ID" value="NC_010554.1"/>
</dbReference>
<dbReference type="SMR" id="B4EYV8"/>
<dbReference type="EnsemblBacteria" id="CAR45509">
    <property type="protein sequence ID" value="CAR45509"/>
    <property type="gene ID" value="PMI2794"/>
</dbReference>
<dbReference type="GeneID" id="93392831"/>
<dbReference type="KEGG" id="pmr:PMI2794"/>
<dbReference type="eggNOG" id="COG0049">
    <property type="taxonomic scope" value="Bacteria"/>
</dbReference>
<dbReference type="HOGENOM" id="CLU_072226_1_1_6"/>
<dbReference type="Proteomes" id="UP000008319">
    <property type="component" value="Chromosome"/>
</dbReference>
<dbReference type="GO" id="GO:0015935">
    <property type="term" value="C:small ribosomal subunit"/>
    <property type="evidence" value="ECO:0007669"/>
    <property type="project" value="InterPro"/>
</dbReference>
<dbReference type="GO" id="GO:0019843">
    <property type="term" value="F:rRNA binding"/>
    <property type="evidence" value="ECO:0007669"/>
    <property type="project" value="UniProtKB-UniRule"/>
</dbReference>
<dbReference type="GO" id="GO:0003735">
    <property type="term" value="F:structural constituent of ribosome"/>
    <property type="evidence" value="ECO:0007669"/>
    <property type="project" value="InterPro"/>
</dbReference>
<dbReference type="GO" id="GO:0000049">
    <property type="term" value="F:tRNA binding"/>
    <property type="evidence" value="ECO:0007669"/>
    <property type="project" value="UniProtKB-UniRule"/>
</dbReference>
<dbReference type="GO" id="GO:0006412">
    <property type="term" value="P:translation"/>
    <property type="evidence" value="ECO:0007669"/>
    <property type="project" value="UniProtKB-UniRule"/>
</dbReference>
<dbReference type="CDD" id="cd14869">
    <property type="entry name" value="uS7_Bacteria"/>
    <property type="match status" value="1"/>
</dbReference>
<dbReference type="FunFam" id="1.10.455.10:FF:000001">
    <property type="entry name" value="30S ribosomal protein S7"/>
    <property type="match status" value="1"/>
</dbReference>
<dbReference type="Gene3D" id="1.10.455.10">
    <property type="entry name" value="Ribosomal protein S7 domain"/>
    <property type="match status" value="1"/>
</dbReference>
<dbReference type="HAMAP" id="MF_00480_B">
    <property type="entry name" value="Ribosomal_uS7_B"/>
    <property type="match status" value="1"/>
</dbReference>
<dbReference type="InterPro" id="IPR000235">
    <property type="entry name" value="Ribosomal_uS7"/>
</dbReference>
<dbReference type="InterPro" id="IPR005717">
    <property type="entry name" value="Ribosomal_uS7_bac/org-type"/>
</dbReference>
<dbReference type="InterPro" id="IPR020606">
    <property type="entry name" value="Ribosomal_uS7_CS"/>
</dbReference>
<dbReference type="InterPro" id="IPR023798">
    <property type="entry name" value="Ribosomal_uS7_dom"/>
</dbReference>
<dbReference type="InterPro" id="IPR036823">
    <property type="entry name" value="Ribosomal_uS7_dom_sf"/>
</dbReference>
<dbReference type="NCBIfam" id="TIGR01029">
    <property type="entry name" value="rpsG_bact"/>
    <property type="match status" value="1"/>
</dbReference>
<dbReference type="PANTHER" id="PTHR11205">
    <property type="entry name" value="RIBOSOMAL PROTEIN S7"/>
    <property type="match status" value="1"/>
</dbReference>
<dbReference type="Pfam" id="PF00177">
    <property type="entry name" value="Ribosomal_S7"/>
    <property type="match status" value="1"/>
</dbReference>
<dbReference type="PIRSF" id="PIRSF002122">
    <property type="entry name" value="RPS7p_RPS7a_RPS5e_RPS7o"/>
    <property type="match status" value="1"/>
</dbReference>
<dbReference type="SUPFAM" id="SSF47973">
    <property type="entry name" value="Ribosomal protein S7"/>
    <property type="match status" value="1"/>
</dbReference>
<dbReference type="PROSITE" id="PS00052">
    <property type="entry name" value="RIBOSOMAL_S7"/>
    <property type="match status" value="1"/>
</dbReference>
<comment type="function">
    <text evidence="1">One of the primary rRNA binding proteins, it binds directly to 16S rRNA where it nucleates assembly of the head domain of the 30S subunit. Is located at the subunit interface close to the decoding center, probably blocks exit of the E-site tRNA.</text>
</comment>
<comment type="subunit">
    <text evidence="1">Part of the 30S ribosomal subunit. Contacts proteins S9 and S11.</text>
</comment>
<comment type="similarity">
    <text evidence="1">Belongs to the universal ribosomal protein uS7 family.</text>
</comment>